<reference evidence="7 8" key="1">
    <citation type="journal article" date="2004" name="Biochem. Biophys. Res. Commun.">
        <title>ATFC is a novel transducer for the unfolded protein response in Bombyx mori BM5 cells.</title>
        <authorList>
            <person name="Goo T.W."/>
            <person name="Yun E.Y."/>
            <person name="Choi K.H."/>
            <person name="Kim S.H."/>
            <person name="Nho S.K."/>
            <person name="Kang S.W."/>
            <person name="Kwon O.Y."/>
        </authorList>
    </citation>
    <scope>NUCLEOTIDE SEQUENCE [MRNA]</scope>
    <scope>FUNCTION</scope>
    <scope>INDUCTION</scope>
</reference>
<feature type="chain" id="PRO_0000390498" description="Activating transcription factor of chaperone">
    <location>
        <begin position="1"/>
        <end position="236"/>
    </location>
</feature>
<feature type="domain" description="bZIP" evidence="3">
    <location>
        <begin position="165"/>
        <end position="228"/>
    </location>
</feature>
<feature type="region of interest" description="Disordered" evidence="4">
    <location>
        <begin position="117"/>
        <end position="185"/>
    </location>
</feature>
<feature type="region of interest" description="Basic motif" evidence="3">
    <location>
        <begin position="167"/>
        <end position="187"/>
    </location>
</feature>
<feature type="region of interest" description="Leucine-zipper" evidence="3">
    <location>
        <begin position="193"/>
        <end position="228"/>
    </location>
</feature>
<feature type="compositionally biased region" description="Low complexity" evidence="4">
    <location>
        <begin position="120"/>
        <end position="137"/>
    </location>
</feature>
<feature type="compositionally biased region" description="Basic and acidic residues" evidence="4">
    <location>
        <begin position="162"/>
        <end position="175"/>
    </location>
</feature>
<keyword id="KW-0010">Activator</keyword>
<keyword id="KW-0238">DNA-binding</keyword>
<keyword id="KW-0539">Nucleus</keyword>
<keyword id="KW-1185">Reference proteome</keyword>
<keyword id="KW-0804">Transcription</keyword>
<keyword id="KW-0805">Transcription regulation</keyword>
<keyword id="KW-0834">Unfolded protein response</keyword>
<dbReference type="EMBL" id="AF325210">
    <property type="protein sequence ID" value="AAG45935.1"/>
    <property type="molecule type" value="mRNA"/>
</dbReference>
<dbReference type="RefSeq" id="NP_001037041.1">
    <property type="nucleotide sequence ID" value="NM_001043576.1"/>
</dbReference>
<dbReference type="SMR" id="Q9GPH3"/>
<dbReference type="FunCoup" id="Q9GPH3">
    <property type="interactions" value="305"/>
</dbReference>
<dbReference type="STRING" id="7091.Q9GPH3"/>
<dbReference type="EnsemblMetazoa" id="NM_001043576.1">
    <property type="protein sequence ID" value="NP_001037041.1"/>
    <property type="gene ID" value="GeneID_692594"/>
</dbReference>
<dbReference type="GeneID" id="692594"/>
<dbReference type="KEGG" id="bmor:692594"/>
<dbReference type="CTD" id="47767"/>
<dbReference type="InParanoid" id="Q9GPH3"/>
<dbReference type="OrthoDB" id="630426at7088"/>
<dbReference type="Proteomes" id="UP000005204">
    <property type="component" value="Unassembled WGS sequence"/>
</dbReference>
<dbReference type="GO" id="GO:0005634">
    <property type="term" value="C:nucleus"/>
    <property type="evidence" value="ECO:0007669"/>
    <property type="project" value="UniProtKB-SubCell"/>
</dbReference>
<dbReference type="GO" id="GO:0001228">
    <property type="term" value="F:DNA-binding transcription activator activity, RNA polymerase II-specific"/>
    <property type="evidence" value="ECO:0007669"/>
    <property type="project" value="TreeGrafter"/>
</dbReference>
<dbReference type="GO" id="GO:0000977">
    <property type="term" value="F:RNA polymerase II transcription regulatory region sequence-specific DNA binding"/>
    <property type="evidence" value="ECO:0007669"/>
    <property type="project" value="TreeGrafter"/>
</dbReference>
<dbReference type="GO" id="GO:0006986">
    <property type="term" value="P:response to unfolded protein"/>
    <property type="evidence" value="ECO:0007669"/>
    <property type="project" value="UniProtKB-KW"/>
</dbReference>
<dbReference type="CDD" id="cd14692">
    <property type="entry name" value="bZIP_ATF4"/>
    <property type="match status" value="1"/>
</dbReference>
<dbReference type="FunFam" id="1.20.5.170:FF:000021">
    <property type="entry name" value="Cyclic AMP-dependent transcription factor ATF-4"/>
    <property type="match status" value="1"/>
</dbReference>
<dbReference type="Gene3D" id="1.20.5.170">
    <property type="match status" value="1"/>
</dbReference>
<dbReference type="InterPro" id="IPR004827">
    <property type="entry name" value="bZIP"/>
</dbReference>
<dbReference type="InterPro" id="IPR046347">
    <property type="entry name" value="bZIP_sf"/>
</dbReference>
<dbReference type="PANTHER" id="PTHR13044">
    <property type="entry name" value="ACTIVATING TRANSCRIPTION FACTOR ATF 4/5"/>
    <property type="match status" value="1"/>
</dbReference>
<dbReference type="PANTHER" id="PTHR13044:SF14">
    <property type="entry name" value="CRYPTOCEPHAL, ISOFORM A"/>
    <property type="match status" value="1"/>
</dbReference>
<dbReference type="Pfam" id="PF00170">
    <property type="entry name" value="bZIP_1"/>
    <property type="match status" value="1"/>
</dbReference>
<dbReference type="SMART" id="SM00338">
    <property type="entry name" value="BRLZ"/>
    <property type="match status" value="1"/>
</dbReference>
<dbReference type="SUPFAM" id="SSF57959">
    <property type="entry name" value="Leucine zipper domain"/>
    <property type="match status" value="1"/>
</dbReference>
<dbReference type="PROSITE" id="PS50217">
    <property type="entry name" value="BZIP"/>
    <property type="match status" value="1"/>
</dbReference>
<dbReference type="PROSITE" id="PS00036">
    <property type="entry name" value="BZIP_BASIC"/>
    <property type="match status" value="1"/>
</dbReference>
<name>ATFC_BOMMO</name>
<accession>Q9GPH3</accession>
<comment type="function">
    <text evidence="5">Transcriptional activator that acts in the unfolded protein response (UPR) pathway. Acts during endoplasmic reticulum (ER) stress by activating UPR target genes via direct binding to the UPR element (UPRE) (5'-GGAACTGGACAGCGTGTCGAAA-3'). Activates expression of ER chaperones ERP72 and PDI.</text>
</comment>
<comment type="subunit">
    <text evidence="1">Binds DNA as a dimer.</text>
</comment>
<comment type="subcellular location">
    <subcellularLocation>
        <location evidence="7">Nucleus</location>
    </subcellularLocation>
</comment>
<comment type="induction">
    <text evidence="5">By ER stress-inducing agents tunicamycin, DTT, the calcium ionophore A23187, antimycin, monensin and H(2)O(2).</text>
</comment>
<comment type="similarity">
    <text evidence="2">Belongs to the bZIP family.</text>
</comment>
<proteinExistence type="evidence at transcript level"/>
<organism>
    <name type="scientific">Bombyx mori</name>
    <name type="common">Silk moth</name>
    <dbReference type="NCBI Taxonomy" id="7091"/>
    <lineage>
        <taxon>Eukaryota</taxon>
        <taxon>Metazoa</taxon>
        <taxon>Ecdysozoa</taxon>
        <taxon>Arthropoda</taxon>
        <taxon>Hexapoda</taxon>
        <taxon>Insecta</taxon>
        <taxon>Pterygota</taxon>
        <taxon>Neoptera</taxon>
        <taxon>Endopterygota</taxon>
        <taxon>Lepidoptera</taxon>
        <taxon>Glossata</taxon>
        <taxon>Ditrysia</taxon>
        <taxon>Bombycoidea</taxon>
        <taxon>Bombycidae</taxon>
        <taxon>Bombycinae</taxon>
        <taxon>Bombyx</taxon>
    </lineage>
</organism>
<gene>
    <name evidence="6" type="primary">ATFC</name>
    <name evidence="8" type="synonym">ATF</name>
</gene>
<sequence>MSCRAMVSPPSRTARAGAVLASSPFVTSQPTEELLREFETVYGAVELTHLTPPQSPPGPATQLLLSYAQQAQCTALAPPAPLAPPQEAWQIVAPVPVNQLPEGYECDLDAVEELVRHRASQLASPQHSSSSANASPRSSPPPSPRSSSTDEDWSAPSRLKTRPVDDRRSRKKEQNKNAATRYRQKKKAEVEVLLKEEQTLRQRHTELGEKCSDLQREIRYLKALMRDLFKAKGLIK</sequence>
<evidence type="ECO:0000250" key="1">
    <source>
        <dbReference type="UniProtKB" id="P18846"/>
    </source>
</evidence>
<evidence type="ECO:0000255" key="2"/>
<evidence type="ECO:0000255" key="3">
    <source>
        <dbReference type="PROSITE-ProRule" id="PRU00978"/>
    </source>
</evidence>
<evidence type="ECO:0000256" key="4">
    <source>
        <dbReference type="SAM" id="MobiDB-lite"/>
    </source>
</evidence>
<evidence type="ECO:0000269" key="5">
    <source>
    </source>
</evidence>
<evidence type="ECO:0000303" key="6">
    <source>
    </source>
</evidence>
<evidence type="ECO:0000305" key="7"/>
<evidence type="ECO:0000312" key="8">
    <source>
        <dbReference type="EMBL" id="AAG45935.1"/>
    </source>
</evidence>
<protein>
    <recommendedName>
        <fullName evidence="6">Activating transcription factor of chaperone</fullName>
    </recommendedName>
</protein>